<feature type="chain" id="PRO_0000422192" description="Chorismate mutase 2">
    <location>
        <begin position="1"/>
        <end position="265"/>
    </location>
</feature>
<feature type="domain" description="Chorismate mutase" evidence="2">
    <location>
        <begin position="10"/>
        <end position="265"/>
    </location>
</feature>
<proteinExistence type="evidence at protein level"/>
<keyword id="KW-0028">Amino-acid biosynthesis</keyword>
<keyword id="KW-0057">Aromatic amino acid biosynthesis</keyword>
<keyword id="KW-0963">Cytoplasm</keyword>
<keyword id="KW-0413">Isomerase</keyword>
<keyword id="KW-1185">Reference proteome</keyword>
<reference key="1">
    <citation type="journal article" date="1996" name="Plant J.">
        <title>Cytosolic and plastidic chorismate mutase isozymes from Arabidopsis thaliana: molecular characterization and enzymatic properties.</title>
        <authorList>
            <person name="Eberhard J."/>
            <person name="Ehrler T.T."/>
            <person name="Epple P."/>
            <person name="Felix G."/>
            <person name="Raesecke H.R."/>
            <person name="Amrhein N."/>
            <person name="Schmid J."/>
        </authorList>
    </citation>
    <scope>NUCLEOTIDE SEQUENCE [MRNA]</scope>
    <scope>CATALYTIC ACTIVITY</scope>
    <scope>ACTIVITY REGULATION</scope>
    <scope>TISSUE SPECIFICITY</scope>
    <scope>INDUCTION</scope>
    <scope>PATHWAY</scope>
</reference>
<reference key="2">
    <citation type="submission" date="1999-05" db="EMBL/GenBank/DDBJ databases">
        <title>Expression analysis of Arabidopsis thaliana genes for plastidic (CM1) and cytosolic (CM2) chorismate mutases.</title>
        <authorList>
            <person name="Kuhn R."/>
            <person name="Vogt E."/>
            <person name="Schmid J."/>
            <person name="Amrhein N."/>
            <person name="Schaller A."/>
        </authorList>
    </citation>
    <scope>NUCLEOTIDE SEQUENCE [GENOMIC DNA]</scope>
    <source>
        <strain>cv. Landsberg erecta</strain>
    </source>
</reference>
<reference key="3">
    <citation type="journal article" date="2000" name="Nature">
        <title>Sequence and analysis of chromosome 5 of the plant Arabidopsis thaliana.</title>
        <authorList>
            <person name="Tabata S."/>
            <person name="Kaneko T."/>
            <person name="Nakamura Y."/>
            <person name="Kotani H."/>
            <person name="Kato T."/>
            <person name="Asamizu E."/>
            <person name="Miyajima N."/>
            <person name="Sasamoto S."/>
            <person name="Kimura T."/>
            <person name="Hosouchi T."/>
            <person name="Kawashima K."/>
            <person name="Kohara M."/>
            <person name="Matsumoto M."/>
            <person name="Matsuno A."/>
            <person name="Muraki A."/>
            <person name="Nakayama S."/>
            <person name="Nakazaki N."/>
            <person name="Naruo K."/>
            <person name="Okumura S."/>
            <person name="Shinpo S."/>
            <person name="Takeuchi C."/>
            <person name="Wada T."/>
            <person name="Watanabe A."/>
            <person name="Yamada M."/>
            <person name="Yasuda M."/>
            <person name="Sato S."/>
            <person name="de la Bastide M."/>
            <person name="Huang E."/>
            <person name="Spiegel L."/>
            <person name="Gnoj L."/>
            <person name="O'Shaughnessy A."/>
            <person name="Preston R."/>
            <person name="Habermann K."/>
            <person name="Murray J."/>
            <person name="Johnson D."/>
            <person name="Rohlfing T."/>
            <person name="Nelson J."/>
            <person name="Stoneking T."/>
            <person name="Pepin K."/>
            <person name="Spieth J."/>
            <person name="Sekhon M."/>
            <person name="Armstrong J."/>
            <person name="Becker M."/>
            <person name="Belter E."/>
            <person name="Cordum H."/>
            <person name="Cordes M."/>
            <person name="Courtney L."/>
            <person name="Courtney W."/>
            <person name="Dante M."/>
            <person name="Du H."/>
            <person name="Edwards J."/>
            <person name="Fryman J."/>
            <person name="Haakensen B."/>
            <person name="Lamar E."/>
            <person name="Latreille P."/>
            <person name="Leonard S."/>
            <person name="Meyer R."/>
            <person name="Mulvaney E."/>
            <person name="Ozersky P."/>
            <person name="Riley A."/>
            <person name="Strowmatt C."/>
            <person name="Wagner-McPherson C."/>
            <person name="Wollam A."/>
            <person name="Yoakum M."/>
            <person name="Bell M."/>
            <person name="Dedhia N."/>
            <person name="Parnell L."/>
            <person name="Shah R."/>
            <person name="Rodriguez M."/>
            <person name="Hoon See L."/>
            <person name="Vil D."/>
            <person name="Baker J."/>
            <person name="Kirchoff K."/>
            <person name="Toth K."/>
            <person name="King L."/>
            <person name="Bahret A."/>
            <person name="Miller B."/>
            <person name="Marra M.A."/>
            <person name="Martienssen R."/>
            <person name="McCombie W.R."/>
            <person name="Wilson R.K."/>
            <person name="Murphy G."/>
            <person name="Bancroft I."/>
            <person name="Volckaert G."/>
            <person name="Wambutt R."/>
            <person name="Duesterhoeft A."/>
            <person name="Stiekema W."/>
            <person name="Pohl T."/>
            <person name="Entian K.-D."/>
            <person name="Terryn N."/>
            <person name="Hartley N."/>
            <person name="Bent E."/>
            <person name="Johnson S."/>
            <person name="Langham S.-A."/>
            <person name="McCullagh B."/>
            <person name="Robben J."/>
            <person name="Grymonprez B."/>
            <person name="Zimmermann W."/>
            <person name="Ramsperger U."/>
            <person name="Wedler H."/>
            <person name="Balke K."/>
            <person name="Wedler E."/>
            <person name="Peters S."/>
            <person name="van Staveren M."/>
            <person name="Dirkse W."/>
            <person name="Mooijman P."/>
            <person name="Klein Lankhorst R."/>
            <person name="Weitzenegger T."/>
            <person name="Bothe G."/>
            <person name="Rose M."/>
            <person name="Hauf J."/>
            <person name="Berneiser S."/>
            <person name="Hempel S."/>
            <person name="Feldpausch M."/>
            <person name="Lamberth S."/>
            <person name="Villarroel R."/>
            <person name="Gielen J."/>
            <person name="Ardiles W."/>
            <person name="Bents O."/>
            <person name="Lemcke K."/>
            <person name="Kolesov G."/>
            <person name="Mayer K.F.X."/>
            <person name="Rudd S."/>
            <person name="Schoof H."/>
            <person name="Schueller C."/>
            <person name="Zaccaria P."/>
            <person name="Mewes H.-W."/>
            <person name="Bevan M."/>
            <person name="Fransz P.F."/>
        </authorList>
    </citation>
    <scope>NUCLEOTIDE SEQUENCE [LARGE SCALE GENOMIC DNA]</scope>
    <source>
        <strain>cv. Columbia</strain>
    </source>
</reference>
<reference key="4">
    <citation type="journal article" date="2017" name="Plant J.">
        <title>Araport11: a complete reannotation of the Arabidopsis thaliana reference genome.</title>
        <authorList>
            <person name="Cheng C.Y."/>
            <person name="Krishnakumar V."/>
            <person name="Chan A.P."/>
            <person name="Thibaud-Nissen F."/>
            <person name="Schobel S."/>
            <person name="Town C.D."/>
        </authorList>
    </citation>
    <scope>GENOME REANNOTATION</scope>
    <source>
        <strain>cv. Columbia</strain>
    </source>
</reference>
<reference key="5">
    <citation type="journal article" date="2003" name="Science">
        <title>Empirical analysis of transcriptional activity in the Arabidopsis genome.</title>
        <authorList>
            <person name="Yamada K."/>
            <person name="Lim J."/>
            <person name="Dale J.M."/>
            <person name="Chen H."/>
            <person name="Shinn P."/>
            <person name="Palm C.J."/>
            <person name="Southwick A.M."/>
            <person name="Wu H.C."/>
            <person name="Kim C.J."/>
            <person name="Nguyen M."/>
            <person name="Pham P.K."/>
            <person name="Cheuk R.F."/>
            <person name="Karlin-Newmann G."/>
            <person name="Liu S.X."/>
            <person name="Lam B."/>
            <person name="Sakano H."/>
            <person name="Wu T."/>
            <person name="Yu G."/>
            <person name="Miranda M."/>
            <person name="Quach H.L."/>
            <person name="Tripp M."/>
            <person name="Chang C.H."/>
            <person name="Lee J.M."/>
            <person name="Toriumi M.J."/>
            <person name="Chan M.M."/>
            <person name="Tang C.C."/>
            <person name="Onodera C.S."/>
            <person name="Deng J.M."/>
            <person name="Akiyama K."/>
            <person name="Ansari Y."/>
            <person name="Arakawa T."/>
            <person name="Banh J."/>
            <person name="Banno F."/>
            <person name="Bowser L."/>
            <person name="Brooks S.Y."/>
            <person name="Carninci P."/>
            <person name="Chao Q."/>
            <person name="Choy N."/>
            <person name="Enju A."/>
            <person name="Goldsmith A.D."/>
            <person name="Gurjal M."/>
            <person name="Hansen N.F."/>
            <person name="Hayashizaki Y."/>
            <person name="Johnson-Hopson C."/>
            <person name="Hsuan V.W."/>
            <person name="Iida K."/>
            <person name="Karnes M."/>
            <person name="Khan S."/>
            <person name="Koesema E."/>
            <person name="Ishida J."/>
            <person name="Jiang P.X."/>
            <person name="Jones T."/>
            <person name="Kawai J."/>
            <person name="Kamiya A."/>
            <person name="Meyers C."/>
            <person name="Nakajima M."/>
            <person name="Narusaka M."/>
            <person name="Seki M."/>
            <person name="Sakurai T."/>
            <person name="Satou M."/>
            <person name="Tamse R."/>
            <person name="Vaysberg M."/>
            <person name="Wallender E.K."/>
            <person name="Wong C."/>
            <person name="Yamamura Y."/>
            <person name="Yuan S."/>
            <person name="Shinozaki K."/>
            <person name="Davis R.W."/>
            <person name="Theologis A."/>
            <person name="Ecker J.R."/>
        </authorList>
    </citation>
    <scope>NUCLEOTIDE SEQUENCE [LARGE SCALE MRNA]</scope>
    <source>
        <strain>cv. Columbia</strain>
    </source>
</reference>
<reference key="6">
    <citation type="journal article" date="1999" name="Gene">
        <title>Identification, characterization and comparative analysis of a novel chorismate mutase gene in Arabidopsis thaliana.</title>
        <authorList>
            <person name="Mobley E.M."/>
            <person name="Kunkel B.N."/>
            <person name="Keith B."/>
        </authorList>
    </citation>
    <scope>CATALYTIC ACTIVITY</scope>
    <scope>ACTIVITY REGULATION</scope>
    <scope>BIOPHYSICOCHEMICAL PROPERTIES</scope>
    <scope>INDUCTION</scope>
    <scope>PATHWAY</scope>
</reference>
<reference key="7">
    <citation type="journal article" date="2014" name="J. Biol. Chem.">
        <title>Structural evolution of differential amino acid effector regulation in plant chorismate mutases.</title>
        <authorList>
            <person name="Westfall C.S."/>
            <person name="Xu A."/>
            <person name="Jez J.M."/>
        </authorList>
    </citation>
    <scope>CATALYTIC ACTIVITY</scope>
    <scope>ACTIVITY REGULATION</scope>
    <scope>HOMODIMERIZATION</scope>
    <scope>BIOPHYSICOCHEMICAL PROPERTIES</scope>
</reference>
<dbReference type="EC" id="5.4.99.5" evidence="3 4 5"/>
<dbReference type="EMBL" id="L47355">
    <property type="protein sequence ID" value="AAD48922.1"/>
    <property type="molecule type" value="mRNA"/>
</dbReference>
<dbReference type="EMBL" id="AJ242648">
    <property type="protein sequence ID" value="CAB54519.1"/>
    <property type="molecule type" value="Genomic_DNA"/>
</dbReference>
<dbReference type="EMBL" id="AL365234">
    <property type="protein sequence ID" value="CAB96842.1"/>
    <property type="molecule type" value="Genomic_DNA"/>
</dbReference>
<dbReference type="EMBL" id="CP002688">
    <property type="protein sequence ID" value="AED91604.1"/>
    <property type="molecule type" value="Genomic_DNA"/>
</dbReference>
<dbReference type="EMBL" id="AY065238">
    <property type="protein sequence ID" value="AAL38714.1"/>
    <property type="molecule type" value="mRNA"/>
</dbReference>
<dbReference type="EMBL" id="AY133840">
    <property type="protein sequence ID" value="AAM91774.1"/>
    <property type="molecule type" value="mRNA"/>
</dbReference>
<dbReference type="PIR" id="T50796">
    <property type="entry name" value="T50796"/>
</dbReference>
<dbReference type="RefSeq" id="NP_196648.1">
    <property type="nucleotide sequence ID" value="NM_121125.3"/>
</dbReference>
<dbReference type="SMR" id="Q9S7H4"/>
<dbReference type="FunCoup" id="Q9S7H4">
    <property type="interactions" value="737"/>
</dbReference>
<dbReference type="STRING" id="3702.Q9S7H4"/>
<dbReference type="PaxDb" id="3702-AT5G10870.1"/>
<dbReference type="ProteomicsDB" id="240897"/>
<dbReference type="EnsemblPlants" id="AT5G10870.1">
    <property type="protein sequence ID" value="AT5G10870.1"/>
    <property type="gene ID" value="AT5G10870"/>
</dbReference>
<dbReference type="GeneID" id="830954"/>
<dbReference type="Gramene" id="AT5G10870.1">
    <property type="protein sequence ID" value="AT5G10870.1"/>
    <property type="gene ID" value="AT5G10870"/>
</dbReference>
<dbReference type="KEGG" id="ath:AT5G10870"/>
<dbReference type="Araport" id="AT5G10870"/>
<dbReference type="TAIR" id="AT5G10870">
    <property type="gene designation" value="CM2"/>
</dbReference>
<dbReference type="eggNOG" id="KOG0795">
    <property type="taxonomic scope" value="Eukaryota"/>
</dbReference>
<dbReference type="HOGENOM" id="CLU_057757_0_0_1"/>
<dbReference type="InParanoid" id="Q9S7H4"/>
<dbReference type="OMA" id="FLDWALM"/>
<dbReference type="PhylomeDB" id="Q9S7H4"/>
<dbReference type="BioCyc" id="ARA:AT5G10870-MONOMER"/>
<dbReference type="BioCyc" id="MetaCyc:AT5G10870-MONOMER"/>
<dbReference type="BRENDA" id="5.4.99.5">
    <property type="organism ID" value="399"/>
</dbReference>
<dbReference type="SABIO-RK" id="Q9S7H4"/>
<dbReference type="UniPathway" id="UPA00120">
    <property type="reaction ID" value="UER00203"/>
</dbReference>
<dbReference type="PRO" id="PR:Q9S7H4"/>
<dbReference type="Proteomes" id="UP000006548">
    <property type="component" value="Chromosome 5"/>
</dbReference>
<dbReference type="ExpressionAtlas" id="Q9S7H4">
    <property type="expression patterns" value="baseline and differential"/>
</dbReference>
<dbReference type="GO" id="GO:0005829">
    <property type="term" value="C:cytosol"/>
    <property type="evidence" value="ECO:0007669"/>
    <property type="project" value="UniProtKB-SubCell"/>
</dbReference>
<dbReference type="GO" id="GO:0004106">
    <property type="term" value="F:chorismate mutase activity"/>
    <property type="evidence" value="ECO:0000314"/>
    <property type="project" value="UniProtKB"/>
</dbReference>
<dbReference type="GO" id="GO:0042803">
    <property type="term" value="F:protein homodimerization activity"/>
    <property type="evidence" value="ECO:0000314"/>
    <property type="project" value="UniProtKB"/>
</dbReference>
<dbReference type="GO" id="GO:0008652">
    <property type="term" value="P:amino acid biosynthetic process"/>
    <property type="evidence" value="ECO:0007669"/>
    <property type="project" value="UniProtKB-KW"/>
</dbReference>
<dbReference type="GO" id="GO:0009073">
    <property type="term" value="P:aromatic amino acid family biosynthetic process"/>
    <property type="evidence" value="ECO:0000314"/>
    <property type="project" value="UniProtKB"/>
</dbReference>
<dbReference type="GO" id="GO:0046417">
    <property type="term" value="P:chorismate metabolic process"/>
    <property type="evidence" value="ECO:0007669"/>
    <property type="project" value="InterPro"/>
</dbReference>
<dbReference type="GO" id="GO:1901747">
    <property type="term" value="P:prephenate(2-) biosynthetic process"/>
    <property type="evidence" value="ECO:0000314"/>
    <property type="project" value="UniProtKB"/>
</dbReference>
<dbReference type="FunFam" id="1.10.590.10:FF:000001">
    <property type="entry name" value="Chorismate mutase"/>
    <property type="match status" value="1"/>
</dbReference>
<dbReference type="Gene3D" id="1.10.590.10">
    <property type="entry name" value="Chorismate mutase, AroQ class superfamily, eukaryotic"/>
    <property type="match status" value="1"/>
</dbReference>
<dbReference type="InterPro" id="IPR036263">
    <property type="entry name" value="Chorismate_II_sf"/>
</dbReference>
<dbReference type="InterPro" id="IPR008238">
    <property type="entry name" value="Chorismate_mutase_AroQ_euk"/>
</dbReference>
<dbReference type="InterPro" id="IPR037039">
    <property type="entry name" value="CM_AroQ_sf_eucaryotic"/>
</dbReference>
<dbReference type="InterPro" id="IPR002701">
    <property type="entry name" value="CM_II_prokaryot"/>
</dbReference>
<dbReference type="NCBIfam" id="TIGR01802">
    <property type="entry name" value="CM_pl-yst"/>
    <property type="match status" value="1"/>
</dbReference>
<dbReference type="PANTHER" id="PTHR21145">
    <property type="entry name" value="CHORISMATE MUTASE"/>
    <property type="match status" value="1"/>
</dbReference>
<dbReference type="PANTHER" id="PTHR21145:SF12">
    <property type="entry name" value="CHORISMATE MUTASE"/>
    <property type="match status" value="1"/>
</dbReference>
<dbReference type="Pfam" id="PF01817">
    <property type="entry name" value="CM_2"/>
    <property type="match status" value="1"/>
</dbReference>
<dbReference type="PIRSF" id="PIRSF017318">
    <property type="entry name" value="Chor_mut_AroQ_eu"/>
    <property type="match status" value="1"/>
</dbReference>
<dbReference type="SUPFAM" id="SSF48600">
    <property type="entry name" value="Chorismate mutase II"/>
    <property type="match status" value="1"/>
</dbReference>
<dbReference type="PROSITE" id="PS51169">
    <property type="entry name" value="CHORISMATE_MUT_3"/>
    <property type="match status" value="1"/>
</dbReference>
<sequence length="265" mass="30491">MARVFESDSGSGCSNVLSLDLIRESLIRQEDTIVFSLIERAKFPLNSPAFEESRCLDSGSFSSLTEFFVRETEIIQAKVGRYEYPEENPFFLENIPHSVFPTHKYPSALHPKALSVNINKQIWDIYFKELLPLFVKPGDDGNYPSTAASDLACLQALSRRIHYGKFVAEVKFRDAPQDYEPAIRAQDREALMKLLTFEKVEEMVKKRVQKKAETFGQEVKFNSGYGDESKKKYKVDPLLASRIYGEWLIPLTKLVEVEYLLRRLD</sequence>
<comment type="catalytic activity">
    <reaction evidence="3 4 5">
        <text>chorismate = prephenate</text>
        <dbReference type="Rhea" id="RHEA:13897"/>
        <dbReference type="ChEBI" id="CHEBI:29748"/>
        <dbReference type="ChEBI" id="CHEBI:29934"/>
        <dbReference type="EC" id="5.4.99.5"/>
    </reaction>
</comment>
<comment type="activity regulation">
    <text evidence="3 4 5">No allosteric regulation.</text>
</comment>
<comment type="biophysicochemical properties">
    <kinetics>
        <KM evidence="4">150 uM for chorismate (at pH 8)</KM>
        <KM evidence="3">0.23 mM for chorismate</KM>
        <text evidence="4">kcat is 38.7 sec(-1) with chorismate as substrate (at pH 8).</text>
    </kinetics>
</comment>
<comment type="pathway">
    <text evidence="3 5">Metabolic intermediate biosynthesis; prephenate biosynthesis; prephenate from chorismate: step 1/1.</text>
</comment>
<comment type="subunit">
    <text evidence="4">Homodimer.</text>
</comment>
<comment type="subcellular location">
    <subcellularLocation>
        <location evidence="1">Cytoplasm</location>
        <location evidence="1">Cytosol</location>
    </subcellularLocation>
</comment>
<comment type="tissue specificity">
    <text evidence="5">Expressed in roots, stems, cauline leaves and flowers, and at lower levels in rosette leaves and siliques.</text>
</comment>
<comment type="induction">
    <text evidence="3 5">Transiently down-regulated by wounding. Not induced by bacterial elicitor or bacterial and fungal pathogens.</text>
</comment>
<gene>
    <name evidence="6" type="primary">CM2</name>
    <name evidence="7" type="ordered locus">At5g10870</name>
    <name evidence="8" type="ORF">T30N20.140</name>
</gene>
<evidence type="ECO:0000250" key="1">
    <source>
        <dbReference type="UniProtKB" id="B4FUP5"/>
    </source>
</evidence>
<evidence type="ECO:0000255" key="2">
    <source>
        <dbReference type="PROSITE-ProRule" id="PRU00516"/>
    </source>
</evidence>
<evidence type="ECO:0000269" key="3">
    <source>
    </source>
</evidence>
<evidence type="ECO:0000269" key="4">
    <source>
    </source>
</evidence>
<evidence type="ECO:0000269" key="5">
    <source>
    </source>
</evidence>
<evidence type="ECO:0000303" key="6">
    <source ref="2"/>
</evidence>
<evidence type="ECO:0000312" key="7">
    <source>
        <dbReference type="Araport" id="AT5G10870"/>
    </source>
</evidence>
<evidence type="ECO:0000312" key="8">
    <source>
        <dbReference type="EMBL" id="CAB96842.1"/>
    </source>
</evidence>
<name>CM2_ARATH</name>
<organism>
    <name type="scientific">Arabidopsis thaliana</name>
    <name type="common">Mouse-ear cress</name>
    <dbReference type="NCBI Taxonomy" id="3702"/>
    <lineage>
        <taxon>Eukaryota</taxon>
        <taxon>Viridiplantae</taxon>
        <taxon>Streptophyta</taxon>
        <taxon>Embryophyta</taxon>
        <taxon>Tracheophyta</taxon>
        <taxon>Spermatophyta</taxon>
        <taxon>Magnoliopsida</taxon>
        <taxon>eudicotyledons</taxon>
        <taxon>Gunneridae</taxon>
        <taxon>Pentapetalae</taxon>
        <taxon>rosids</taxon>
        <taxon>malvids</taxon>
        <taxon>Brassicales</taxon>
        <taxon>Brassicaceae</taxon>
        <taxon>Camelineae</taxon>
        <taxon>Arabidopsis</taxon>
    </lineage>
</organism>
<protein>
    <recommendedName>
        <fullName evidence="6">Chorismate mutase 2</fullName>
        <shortName evidence="6">AtCM2</shortName>
        <ecNumber evidence="3 4 5">5.4.99.5</ecNumber>
    </recommendedName>
    <alternativeName>
        <fullName evidence="6">CM-2</fullName>
    </alternativeName>
</protein>
<accession>Q9S7H4</accession>